<comment type="function">
    <text evidence="2">With CysD forms the ATP sulfurylase (ATPS) that catalyzes the adenylation of sulfate producing adenosine 5'-phosphosulfate (APS) and diphosphate, the first enzymatic step in sulfur assimilation pathway. APS synthesis involves the formation of a high-energy phosphoric-sulfuric acid anhydride bond driven by GTP hydrolysis by CysN coupled to ATP hydrolysis by CysD.</text>
</comment>
<comment type="catalytic activity">
    <reaction evidence="2">
        <text>sulfate + ATP + H(+) = adenosine 5'-phosphosulfate + diphosphate</text>
        <dbReference type="Rhea" id="RHEA:18133"/>
        <dbReference type="ChEBI" id="CHEBI:15378"/>
        <dbReference type="ChEBI" id="CHEBI:16189"/>
        <dbReference type="ChEBI" id="CHEBI:30616"/>
        <dbReference type="ChEBI" id="CHEBI:33019"/>
        <dbReference type="ChEBI" id="CHEBI:58243"/>
        <dbReference type="EC" id="2.7.7.4"/>
    </reaction>
</comment>
<comment type="pathway">
    <text evidence="2">Sulfur metabolism; hydrogen sulfide biosynthesis; sulfite from sulfate: step 1/3.</text>
</comment>
<comment type="subunit">
    <text evidence="2">Heterodimer composed of CysD, the smaller subunit, and CysN.</text>
</comment>
<comment type="similarity">
    <text evidence="2">Belongs to the TRAFAC class translation factor GTPase superfamily. Classic translation factor GTPase family. CysN/NodQ subfamily.</text>
</comment>
<name>CYSN_YERPS</name>
<evidence type="ECO:0000250" key="1"/>
<evidence type="ECO:0000255" key="2">
    <source>
        <dbReference type="HAMAP-Rule" id="MF_00062"/>
    </source>
</evidence>
<keyword id="KW-0067">ATP-binding</keyword>
<keyword id="KW-0342">GTP-binding</keyword>
<keyword id="KW-0547">Nucleotide-binding</keyword>
<keyword id="KW-0548">Nucleotidyltransferase</keyword>
<keyword id="KW-0808">Transferase</keyword>
<proteinExistence type="inferred from homology"/>
<organism>
    <name type="scientific">Yersinia pseudotuberculosis serotype I (strain IP32953)</name>
    <dbReference type="NCBI Taxonomy" id="273123"/>
    <lineage>
        <taxon>Bacteria</taxon>
        <taxon>Pseudomonadati</taxon>
        <taxon>Pseudomonadota</taxon>
        <taxon>Gammaproteobacteria</taxon>
        <taxon>Enterobacterales</taxon>
        <taxon>Yersiniaceae</taxon>
        <taxon>Yersinia</taxon>
    </lineage>
</organism>
<feature type="chain" id="PRO_1000092167" description="Sulfate adenylyltransferase subunit 1">
    <location>
        <begin position="1"/>
        <end position="478"/>
    </location>
</feature>
<feature type="domain" description="tr-type G">
    <location>
        <begin position="28"/>
        <end position="244"/>
    </location>
</feature>
<feature type="region of interest" description="G1" evidence="1">
    <location>
        <begin position="37"/>
        <end position="44"/>
    </location>
</feature>
<feature type="region of interest" description="G2" evidence="1">
    <location>
        <begin position="95"/>
        <end position="99"/>
    </location>
</feature>
<feature type="region of interest" description="G3" evidence="1">
    <location>
        <begin position="116"/>
        <end position="119"/>
    </location>
</feature>
<feature type="region of interest" description="G4" evidence="1">
    <location>
        <begin position="171"/>
        <end position="174"/>
    </location>
</feature>
<feature type="region of interest" description="G5" evidence="1">
    <location>
        <begin position="209"/>
        <end position="211"/>
    </location>
</feature>
<feature type="binding site" evidence="2">
    <location>
        <begin position="37"/>
        <end position="44"/>
    </location>
    <ligand>
        <name>GTP</name>
        <dbReference type="ChEBI" id="CHEBI:37565"/>
    </ligand>
</feature>
<feature type="binding site" evidence="2">
    <location>
        <begin position="116"/>
        <end position="120"/>
    </location>
    <ligand>
        <name>GTP</name>
        <dbReference type="ChEBI" id="CHEBI:37565"/>
    </ligand>
</feature>
<feature type="binding site" evidence="2">
    <location>
        <begin position="171"/>
        <end position="174"/>
    </location>
    <ligand>
        <name>GTP</name>
        <dbReference type="ChEBI" id="CHEBI:37565"/>
    </ligand>
</feature>
<dbReference type="EC" id="2.7.7.4" evidence="2"/>
<dbReference type="EMBL" id="BX936398">
    <property type="protein sequence ID" value="CAH20006.1"/>
    <property type="molecule type" value="Genomic_DNA"/>
</dbReference>
<dbReference type="RefSeq" id="WP_002228227.1">
    <property type="nucleotide sequence ID" value="NZ_CP009712.1"/>
</dbReference>
<dbReference type="SMR" id="Q66EC7"/>
<dbReference type="GeneID" id="57975344"/>
<dbReference type="KEGG" id="yps:YPTB0766"/>
<dbReference type="UniPathway" id="UPA00140">
    <property type="reaction ID" value="UER00204"/>
</dbReference>
<dbReference type="Proteomes" id="UP000001011">
    <property type="component" value="Chromosome"/>
</dbReference>
<dbReference type="GO" id="GO:0005524">
    <property type="term" value="F:ATP binding"/>
    <property type="evidence" value="ECO:0007669"/>
    <property type="project" value="UniProtKB-KW"/>
</dbReference>
<dbReference type="GO" id="GO:0005525">
    <property type="term" value="F:GTP binding"/>
    <property type="evidence" value="ECO:0007669"/>
    <property type="project" value="UniProtKB-UniRule"/>
</dbReference>
<dbReference type="GO" id="GO:0003924">
    <property type="term" value="F:GTPase activity"/>
    <property type="evidence" value="ECO:0007669"/>
    <property type="project" value="InterPro"/>
</dbReference>
<dbReference type="GO" id="GO:0004781">
    <property type="term" value="F:sulfate adenylyltransferase (ATP) activity"/>
    <property type="evidence" value="ECO:0007669"/>
    <property type="project" value="UniProtKB-UniRule"/>
</dbReference>
<dbReference type="GO" id="GO:0070814">
    <property type="term" value="P:hydrogen sulfide biosynthetic process"/>
    <property type="evidence" value="ECO:0007669"/>
    <property type="project" value="UniProtKB-UniRule"/>
</dbReference>
<dbReference type="GO" id="GO:0000103">
    <property type="term" value="P:sulfate assimilation"/>
    <property type="evidence" value="ECO:0007669"/>
    <property type="project" value="UniProtKB-UniRule"/>
</dbReference>
<dbReference type="CDD" id="cd04166">
    <property type="entry name" value="CysN_ATPS"/>
    <property type="match status" value="1"/>
</dbReference>
<dbReference type="CDD" id="cd03695">
    <property type="entry name" value="CysN_NodQ_II"/>
    <property type="match status" value="1"/>
</dbReference>
<dbReference type="CDD" id="cd04095">
    <property type="entry name" value="CysN_NoDQ_III"/>
    <property type="match status" value="1"/>
</dbReference>
<dbReference type="FunFam" id="2.40.30.10:FF:000027">
    <property type="entry name" value="Sulfate adenylyltransferase subunit 1"/>
    <property type="match status" value="1"/>
</dbReference>
<dbReference type="FunFam" id="2.40.30.10:FF:000031">
    <property type="entry name" value="Sulfate adenylyltransferase subunit 1"/>
    <property type="match status" value="1"/>
</dbReference>
<dbReference type="FunFam" id="3.40.50.300:FF:000119">
    <property type="entry name" value="Sulfate adenylyltransferase subunit 1"/>
    <property type="match status" value="1"/>
</dbReference>
<dbReference type="Gene3D" id="3.40.50.300">
    <property type="entry name" value="P-loop containing nucleotide triphosphate hydrolases"/>
    <property type="match status" value="1"/>
</dbReference>
<dbReference type="Gene3D" id="2.40.30.10">
    <property type="entry name" value="Translation factors"/>
    <property type="match status" value="2"/>
</dbReference>
<dbReference type="HAMAP" id="MF_00062">
    <property type="entry name" value="Sulf_adenylyltr_sub1"/>
    <property type="match status" value="1"/>
</dbReference>
<dbReference type="InterPro" id="IPR041757">
    <property type="entry name" value="CysN_GTP-bd"/>
</dbReference>
<dbReference type="InterPro" id="IPR044138">
    <property type="entry name" value="CysN_II"/>
</dbReference>
<dbReference type="InterPro" id="IPR044139">
    <property type="entry name" value="CysN_NoDQ_III"/>
</dbReference>
<dbReference type="InterPro" id="IPR031157">
    <property type="entry name" value="G_TR_CS"/>
</dbReference>
<dbReference type="InterPro" id="IPR054696">
    <property type="entry name" value="GTP-eEF1A_C"/>
</dbReference>
<dbReference type="InterPro" id="IPR027417">
    <property type="entry name" value="P-loop_NTPase"/>
</dbReference>
<dbReference type="InterPro" id="IPR005225">
    <property type="entry name" value="Small_GTP-bd"/>
</dbReference>
<dbReference type="InterPro" id="IPR011779">
    <property type="entry name" value="SO4_adenylTrfase_lsu"/>
</dbReference>
<dbReference type="InterPro" id="IPR000795">
    <property type="entry name" value="T_Tr_GTP-bd_dom"/>
</dbReference>
<dbReference type="InterPro" id="IPR050100">
    <property type="entry name" value="TRAFAC_GTPase_members"/>
</dbReference>
<dbReference type="InterPro" id="IPR009000">
    <property type="entry name" value="Transl_B-barrel_sf"/>
</dbReference>
<dbReference type="InterPro" id="IPR009001">
    <property type="entry name" value="Transl_elong_EF1A/Init_IF2_C"/>
</dbReference>
<dbReference type="NCBIfam" id="TIGR02034">
    <property type="entry name" value="CysN"/>
    <property type="match status" value="1"/>
</dbReference>
<dbReference type="NCBIfam" id="NF003478">
    <property type="entry name" value="PRK05124.1"/>
    <property type="match status" value="1"/>
</dbReference>
<dbReference type="NCBIfam" id="TIGR00231">
    <property type="entry name" value="small_GTP"/>
    <property type="match status" value="1"/>
</dbReference>
<dbReference type="PANTHER" id="PTHR23115">
    <property type="entry name" value="TRANSLATION FACTOR"/>
    <property type="match status" value="1"/>
</dbReference>
<dbReference type="Pfam" id="PF22594">
    <property type="entry name" value="GTP-eEF1A_C"/>
    <property type="match status" value="1"/>
</dbReference>
<dbReference type="Pfam" id="PF00009">
    <property type="entry name" value="GTP_EFTU"/>
    <property type="match status" value="1"/>
</dbReference>
<dbReference type="PRINTS" id="PR00315">
    <property type="entry name" value="ELONGATNFCT"/>
</dbReference>
<dbReference type="SUPFAM" id="SSF50465">
    <property type="entry name" value="EF-Tu/eEF-1alpha/eIF2-gamma C-terminal domain"/>
    <property type="match status" value="1"/>
</dbReference>
<dbReference type="SUPFAM" id="SSF52540">
    <property type="entry name" value="P-loop containing nucleoside triphosphate hydrolases"/>
    <property type="match status" value="1"/>
</dbReference>
<dbReference type="SUPFAM" id="SSF50447">
    <property type="entry name" value="Translation proteins"/>
    <property type="match status" value="1"/>
</dbReference>
<dbReference type="PROSITE" id="PS00301">
    <property type="entry name" value="G_TR_1"/>
    <property type="match status" value="1"/>
</dbReference>
<dbReference type="PROSITE" id="PS51722">
    <property type="entry name" value="G_TR_2"/>
    <property type="match status" value="1"/>
</dbReference>
<protein>
    <recommendedName>
        <fullName evidence="2">Sulfate adenylyltransferase subunit 1</fullName>
        <ecNumber evidence="2">2.7.7.4</ecNumber>
    </recommendedName>
    <alternativeName>
        <fullName evidence="2">ATP-sulfurylase large subunit</fullName>
    </alternativeName>
    <alternativeName>
        <fullName evidence="2">Sulfate adenylate transferase</fullName>
        <shortName evidence="2">SAT</shortName>
    </alternativeName>
</protein>
<gene>
    <name evidence="2" type="primary">cysN</name>
    <name type="ordered locus">YPTB0766</name>
</gene>
<accession>Q66EC7</accession>
<sequence>MILQSNSIAQQIADEGGVEAYLHAQQHKTMLRFLTCGSVDDGKSTLIGRLLHDTRQIYEDQLSTLHTDSKRIGTQGEKLDLALLVDGLQAEREQGITIDVAYRYFSTEKRKFIIADTPGHEQYTRNMATGASTCDLAILLIDARKGVLDQTRRHSFIATLLGIRHLVVAVNKMDLVGFQESVFTQFKDDYLSFAEQLPTDLDIKFVPLSALDGDNVASPSEKMDWYSGPTLLEILESVDVVNARRQQPLRFPVQYVNRPNLDFRGYAGTLSAGVVWVGQKVKVLPSGVESTVARIVTFDGDLTEANPGEAITLVLADEVDISRGDLLVDASETLKAARNALVDVVWMAEQPLVVGQSYDIKVAGKKTRARVENIQYQVEINSLTQRVVENLPLNGIGLVELAFDEPLLLDNYQRNRDTGGMIFIDRLSNVTVGAGLVREALASVYQENHDFSTFELELNALVRRHFPHWGARDLLGGK</sequence>
<reference key="1">
    <citation type="journal article" date="2004" name="Proc. Natl. Acad. Sci. U.S.A.">
        <title>Insights into the evolution of Yersinia pestis through whole-genome comparison with Yersinia pseudotuberculosis.</title>
        <authorList>
            <person name="Chain P.S.G."/>
            <person name="Carniel E."/>
            <person name="Larimer F.W."/>
            <person name="Lamerdin J."/>
            <person name="Stoutland P.O."/>
            <person name="Regala W.M."/>
            <person name="Georgescu A.M."/>
            <person name="Vergez L.M."/>
            <person name="Land M.L."/>
            <person name="Motin V.L."/>
            <person name="Brubaker R.R."/>
            <person name="Fowler J."/>
            <person name="Hinnebusch J."/>
            <person name="Marceau M."/>
            <person name="Medigue C."/>
            <person name="Simonet M."/>
            <person name="Chenal-Francisque V."/>
            <person name="Souza B."/>
            <person name="Dacheux D."/>
            <person name="Elliott J.M."/>
            <person name="Derbise A."/>
            <person name="Hauser L.J."/>
            <person name="Garcia E."/>
        </authorList>
    </citation>
    <scope>NUCLEOTIDE SEQUENCE [LARGE SCALE GENOMIC DNA]</scope>
    <source>
        <strain>IP32953</strain>
    </source>
</reference>